<dbReference type="EC" id="7.1.2.2" evidence="1"/>
<dbReference type="EMBL" id="CP000683">
    <property type="protein sequence ID" value="ABV85226.1"/>
    <property type="status" value="ALT_INIT"/>
    <property type="molecule type" value="Genomic_DNA"/>
</dbReference>
<dbReference type="RefSeq" id="WP_014365373.1">
    <property type="nucleotide sequence ID" value="NC_009900.1"/>
</dbReference>
<dbReference type="SMR" id="A8F2U0"/>
<dbReference type="KEGG" id="rms:RMA_1252"/>
<dbReference type="HOGENOM" id="CLU_022398_0_2_5"/>
<dbReference type="Proteomes" id="UP000001311">
    <property type="component" value="Chromosome"/>
</dbReference>
<dbReference type="GO" id="GO:0005886">
    <property type="term" value="C:plasma membrane"/>
    <property type="evidence" value="ECO:0007669"/>
    <property type="project" value="UniProtKB-SubCell"/>
</dbReference>
<dbReference type="GO" id="GO:0045259">
    <property type="term" value="C:proton-transporting ATP synthase complex"/>
    <property type="evidence" value="ECO:0007669"/>
    <property type="project" value="UniProtKB-KW"/>
</dbReference>
<dbReference type="GO" id="GO:0005524">
    <property type="term" value="F:ATP binding"/>
    <property type="evidence" value="ECO:0007669"/>
    <property type="project" value="UniProtKB-UniRule"/>
</dbReference>
<dbReference type="GO" id="GO:0016887">
    <property type="term" value="F:ATP hydrolysis activity"/>
    <property type="evidence" value="ECO:0007669"/>
    <property type="project" value="InterPro"/>
</dbReference>
<dbReference type="GO" id="GO:0046933">
    <property type="term" value="F:proton-transporting ATP synthase activity, rotational mechanism"/>
    <property type="evidence" value="ECO:0007669"/>
    <property type="project" value="UniProtKB-UniRule"/>
</dbReference>
<dbReference type="CDD" id="cd18110">
    <property type="entry name" value="ATP-synt_F1_beta_C"/>
    <property type="match status" value="1"/>
</dbReference>
<dbReference type="CDD" id="cd18115">
    <property type="entry name" value="ATP-synt_F1_beta_N"/>
    <property type="match status" value="1"/>
</dbReference>
<dbReference type="CDD" id="cd01133">
    <property type="entry name" value="F1-ATPase_beta_CD"/>
    <property type="match status" value="1"/>
</dbReference>
<dbReference type="FunFam" id="1.10.1140.10:FF:000001">
    <property type="entry name" value="ATP synthase subunit beta"/>
    <property type="match status" value="1"/>
</dbReference>
<dbReference type="FunFam" id="2.40.10.170:FF:000014">
    <property type="entry name" value="ATP synthase subunit beta"/>
    <property type="match status" value="1"/>
</dbReference>
<dbReference type="FunFam" id="3.40.50.300:FF:000026">
    <property type="entry name" value="ATP synthase subunit beta"/>
    <property type="match status" value="1"/>
</dbReference>
<dbReference type="Gene3D" id="2.40.10.170">
    <property type="match status" value="1"/>
</dbReference>
<dbReference type="Gene3D" id="1.10.1140.10">
    <property type="entry name" value="Bovine Mitochondrial F1-atpase, Atp Synthase Beta Chain, Chain D, domain 3"/>
    <property type="match status" value="1"/>
</dbReference>
<dbReference type="Gene3D" id="3.40.50.300">
    <property type="entry name" value="P-loop containing nucleotide triphosphate hydrolases"/>
    <property type="match status" value="1"/>
</dbReference>
<dbReference type="HAMAP" id="MF_01347">
    <property type="entry name" value="ATP_synth_beta_bact"/>
    <property type="match status" value="1"/>
</dbReference>
<dbReference type="InterPro" id="IPR003593">
    <property type="entry name" value="AAA+_ATPase"/>
</dbReference>
<dbReference type="InterPro" id="IPR055190">
    <property type="entry name" value="ATP-synt_VA_C"/>
</dbReference>
<dbReference type="InterPro" id="IPR005722">
    <property type="entry name" value="ATP_synth_F1_bsu"/>
</dbReference>
<dbReference type="InterPro" id="IPR020003">
    <property type="entry name" value="ATPase_a/bsu_AS"/>
</dbReference>
<dbReference type="InterPro" id="IPR050053">
    <property type="entry name" value="ATPase_alpha/beta_chains"/>
</dbReference>
<dbReference type="InterPro" id="IPR004100">
    <property type="entry name" value="ATPase_F1/V1/A1_a/bsu_N"/>
</dbReference>
<dbReference type="InterPro" id="IPR036121">
    <property type="entry name" value="ATPase_F1/V1/A1_a/bsu_N_sf"/>
</dbReference>
<dbReference type="InterPro" id="IPR000194">
    <property type="entry name" value="ATPase_F1/V1/A1_a/bsu_nucl-bd"/>
</dbReference>
<dbReference type="InterPro" id="IPR024034">
    <property type="entry name" value="ATPase_F1/V1_b/a_C"/>
</dbReference>
<dbReference type="InterPro" id="IPR027417">
    <property type="entry name" value="P-loop_NTPase"/>
</dbReference>
<dbReference type="NCBIfam" id="TIGR01039">
    <property type="entry name" value="atpD"/>
    <property type="match status" value="1"/>
</dbReference>
<dbReference type="PANTHER" id="PTHR15184">
    <property type="entry name" value="ATP SYNTHASE"/>
    <property type="match status" value="1"/>
</dbReference>
<dbReference type="PANTHER" id="PTHR15184:SF71">
    <property type="entry name" value="ATP SYNTHASE SUBUNIT BETA, MITOCHONDRIAL"/>
    <property type="match status" value="1"/>
</dbReference>
<dbReference type="Pfam" id="PF00006">
    <property type="entry name" value="ATP-synt_ab"/>
    <property type="match status" value="1"/>
</dbReference>
<dbReference type="Pfam" id="PF02874">
    <property type="entry name" value="ATP-synt_ab_N"/>
    <property type="match status" value="1"/>
</dbReference>
<dbReference type="Pfam" id="PF22919">
    <property type="entry name" value="ATP-synt_VA_C"/>
    <property type="match status" value="1"/>
</dbReference>
<dbReference type="PIRSF" id="PIRSF039072">
    <property type="entry name" value="ATPase_subunit_beta"/>
    <property type="match status" value="1"/>
</dbReference>
<dbReference type="SMART" id="SM00382">
    <property type="entry name" value="AAA"/>
    <property type="match status" value="1"/>
</dbReference>
<dbReference type="SUPFAM" id="SSF47917">
    <property type="entry name" value="C-terminal domain of alpha and beta subunits of F1 ATP synthase"/>
    <property type="match status" value="1"/>
</dbReference>
<dbReference type="SUPFAM" id="SSF50615">
    <property type="entry name" value="N-terminal domain of alpha and beta subunits of F1 ATP synthase"/>
    <property type="match status" value="1"/>
</dbReference>
<dbReference type="SUPFAM" id="SSF52540">
    <property type="entry name" value="P-loop containing nucleoside triphosphate hydrolases"/>
    <property type="match status" value="1"/>
</dbReference>
<dbReference type="PROSITE" id="PS00152">
    <property type="entry name" value="ATPASE_ALPHA_BETA"/>
    <property type="match status" value="1"/>
</dbReference>
<organism>
    <name type="scientific">Rickettsia massiliae (strain Mtu5)</name>
    <dbReference type="NCBI Taxonomy" id="416276"/>
    <lineage>
        <taxon>Bacteria</taxon>
        <taxon>Pseudomonadati</taxon>
        <taxon>Pseudomonadota</taxon>
        <taxon>Alphaproteobacteria</taxon>
        <taxon>Rickettsiales</taxon>
        <taxon>Rickettsiaceae</taxon>
        <taxon>Rickettsieae</taxon>
        <taxon>Rickettsia</taxon>
        <taxon>spotted fever group</taxon>
    </lineage>
</organism>
<protein>
    <recommendedName>
        <fullName evidence="1">ATP synthase subunit beta</fullName>
        <ecNumber evidence="1">7.1.2.2</ecNumber>
    </recommendedName>
    <alternativeName>
        <fullName evidence="1">ATP synthase F1 sector subunit beta</fullName>
    </alternativeName>
    <alternativeName>
        <fullName evidence="1">F-ATPase subunit beta</fullName>
    </alternativeName>
</protein>
<reference key="1">
    <citation type="journal article" date="2007" name="Genome Res.">
        <title>Lateral gene transfer between obligate intracellular bacteria: evidence from the Rickettsia massiliae genome.</title>
        <authorList>
            <person name="Blanc G."/>
            <person name="Ogata H."/>
            <person name="Robert C."/>
            <person name="Audic S."/>
            <person name="Claverie J.-M."/>
            <person name="Raoult D."/>
        </authorList>
    </citation>
    <scope>NUCLEOTIDE SEQUENCE [LARGE SCALE GENOMIC DNA]</scope>
    <source>
        <strain>Mtu5</strain>
    </source>
</reference>
<comment type="function">
    <text evidence="1">Produces ATP from ADP in the presence of a proton gradient across the membrane. The catalytic sites are hosted primarily by the beta subunits.</text>
</comment>
<comment type="catalytic activity">
    <reaction evidence="1">
        <text>ATP + H2O + 4 H(+)(in) = ADP + phosphate + 5 H(+)(out)</text>
        <dbReference type="Rhea" id="RHEA:57720"/>
        <dbReference type="ChEBI" id="CHEBI:15377"/>
        <dbReference type="ChEBI" id="CHEBI:15378"/>
        <dbReference type="ChEBI" id="CHEBI:30616"/>
        <dbReference type="ChEBI" id="CHEBI:43474"/>
        <dbReference type="ChEBI" id="CHEBI:456216"/>
        <dbReference type="EC" id="7.1.2.2"/>
    </reaction>
</comment>
<comment type="subunit">
    <text evidence="1">F-type ATPases have 2 components, CF(1) - the catalytic core - and CF(0) - the membrane proton channel. CF(1) has five subunits: alpha(3), beta(3), gamma(1), delta(1), epsilon(1). CF(0) has three main subunits: a(1), b(2) and c(9-12). The alpha and beta chains form an alternating ring which encloses part of the gamma chain. CF(1) is attached to CF(0) by a central stalk formed by the gamma and epsilon chains, while a peripheral stalk is formed by the delta and b chains.</text>
</comment>
<comment type="subcellular location">
    <subcellularLocation>
        <location evidence="1">Cell inner membrane</location>
        <topology evidence="1">Peripheral membrane protein</topology>
    </subcellularLocation>
</comment>
<comment type="similarity">
    <text evidence="1">Belongs to the ATPase alpha/beta chains family.</text>
</comment>
<comment type="sequence caution" evidence="2">
    <conflict type="erroneous initiation">
        <sequence resource="EMBL-CDS" id="ABV85226"/>
    </conflict>
</comment>
<proteinExistence type="inferred from homology"/>
<keyword id="KW-0066">ATP synthesis</keyword>
<keyword id="KW-0067">ATP-binding</keyword>
<keyword id="KW-0997">Cell inner membrane</keyword>
<keyword id="KW-1003">Cell membrane</keyword>
<keyword id="KW-0139">CF(1)</keyword>
<keyword id="KW-0375">Hydrogen ion transport</keyword>
<keyword id="KW-0406">Ion transport</keyword>
<keyword id="KW-0472">Membrane</keyword>
<keyword id="KW-0547">Nucleotide-binding</keyword>
<keyword id="KW-1278">Translocase</keyword>
<keyword id="KW-0813">Transport</keyword>
<name>ATPB_RICM5</name>
<accession>A8F2U0</accession>
<sequence length="473" mass="51101">MAKNIGKITQIISAVVDVKFTNNGELPEILNALECYNDKQRIVLEVAQHIGDDTVRCIAMDSTEGLVRGVEVIDTGSPIRIPVGTETLGRIMNVVGEPIDGKGDIKSSNISSIYKPAPDFTNQSTERNILVTGIKVIDLLAPYTKGGKIGLFGGAGVGKTVLIMELINNVAKAHGGYTVFAGVGERTREGNDLYHEMIDSGVINLAEPEKSKVALVYGQMNEPPGARARVALSGLTIAESFRDMNEGQDVLFFVDNIFRFTQAGSEVSALLGRIPSAVGYQPTLATDMGELQERITSTKYGSITSVQAIYVPADDLTDPAPATSFAHLDATTVLSRQIAELGIYPAVDPLDSNSQVLDPMIVGEEHYSVARQVQQVLQTYKSLQDIIAILGMDELSEEDKLTVVRARKIQRFLSQPFHVAEVFTGAEGKFVNLADTIAGFKGLVEGKYDDLPEAAFYMVGTIDEAIEKAQTLK</sequence>
<evidence type="ECO:0000255" key="1">
    <source>
        <dbReference type="HAMAP-Rule" id="MF_01347"/>
    </source>
</evidence>
<evidence type="ECO:0000305" key="2"/>
<feature type="chain" id="PRO_0000339582" description="ATP synthase subunit beta">
    <location>
        <begin position="1"/>
        <end position="473"/>
    </location>
</feature>
<feature type="binding site" evidence="1">
    <location>
        <begin position="153"/>
        <end position="160"/>
    </location>
    <ligand>
        <name>ATP</name>
        <dbReference type="ChEBI" id="CHEBI:30616"/>
    </ligand>
</feature>
<gene>
    <name evidence="1" type="primary">atpD</name>
    <name type="ordered locus">RMA_1252</name>
</gene>